<sequence length="222" mass="24712">MLKKTIAIIILIIGLLLIFSPFIKNGIVKYMSGHETIEQYKASDIKKNNEKDATFDFESVQLPSMTSVIKGAANYDKDAVVGSIAVPSVDVNLLVFKGTNTANLLAGATTMRSDQVMGKGNYPLAGHHMRDESMLFGPIMKVKKGDKIYLTDLENLYEYTVTETKTIDETEVSVIDNTKDARITLITCDKPTETTKRFVAVGELEKTEKLTKELENKYFPSK</sequence>
<feature type="chain" id="PRO_0000445267" description="Sortase A">
    <location>
        <begin position="1"/>
        <end position="222"/>
    </location>
</feature>
<feature type="topological domain" description="Cytoplasmic" evidence="11">
    <location>
        <begin position="1"/>
        <end position="7"/>
    </location>
</feature>
<feature type="transmembrane region" description="Helical; Note=Membrane anchor" evidence="2 12">
    <location>
        <begin position="8"/>
        <end position="28"/>
    </location>
</feature>
<feature type="topological domain" description="Extracellular" evidence="11">
    <location>
        <begin position="29"/>
        <end position="222"/>
    </location>
</feature>
<feature type="active site" description="Proton donor/acceptor" evidence="1">
    <location>
        <position position="127"/>
    </location>
</feature>
<feature type="active site" description="Acyl-thioester intermediate" evidence="1">
    <location>
        <position position="188"/>
    </location>
</feature>
<feature type="site" description="Transition state stabilizer" evidence="1">
    <location>
        <position position="197"/>
    </location>
</feature>
<feature type="mutagenesis site" description="Lack of transpeptidase activity." evidence="8">
    <original>H</original>
    <variation>A</variation>
    <location>
        <position position="127"/>
    </location>
</feature>
<feature type="mutagenesis site" description="Lack of transpeptidase activity. Does not bind chalcone." evidence="8">
    <original>C</original>
    <variation>A</variation>
    <location>
        <position position="188"/>
    </location>
</feature>
<feature type="mutagenesis site" description="Strong decrease in transpeptidase activity. Does not bind chalcone." evidence="8">
    <original>R</original>
    <variation>A</variation>
    <location>
        <position position="197"/>
    </location>
</feature>
<feature type="strand" evidence="15">
    <location>
        <begin position="80"/>
        <end position="86"/>
    </location>
</feature>
<feature type="helix" evidence="15">
    <location>
        <begin position="87"/>
        <end position="89"/>
    </location>
</feature>
<feature type="strand" evidence="15">
    <location>
        <begin position="91"/>
        <end position="98"/>
    </location>
</feature>
<feature type="strand" evidence="15">
    <location>
        <begin position="101"/>
        <end position="103"/>
    </location>
</feature>
<feature type="turn" evidence="15">
    <location>
        <begin position="104"/>
        <end position="106"/>
    </location>
</feature>
<feature type="strand" evidence="15">
    <location>
        <begin position="107"/>
        <end position="112"/>
    </location>
</feature>
<feature type="strand" evidence="15">
    <location>
        <begin position="119"/>
        <end position="125"/>
    </location>
</feature>
<feature type="helix" evidence="15">
    <location>
        <begin position="137"/>
        <end position="141"/>
    </location>
</feature>
<feature type="strand" evidence="15">
    <location>
        <begin position="147"/>
        <end position="151"/>
    </location>
</feature>
<feature type="strand" evidence="15">
    <location>
        <begin position="153"/>
        <end position="168"/>
    </location>
</feature>
<feature type="helix" evidence="15">
    <location>
        <begin position="172"/>
        <end position="175"/>
    </location>
</feature>
<feature type="strand" evidence="15">
    <location>
        <begin position="182"/>
        <end position="193"/>
    </location>
</feature>
<feature type="strand" evidence="15">
    <location>
        <begin position="195"/>
        <end position="209"/>
    </location>
</feature>
<feature type="helix" evidence="15">
    <location>
        <begin position="212"/>
        <end position="218"/>
    </location>
</feature>
<organism>
    <name type="scientific">Listeria monocytogenes serovar 1/2a (strain ATCC BAA-679 / EGD-e)</name>
    <dbReference type="NCBI Taxonomy" id="169963"/>
    <lineage>
        <taxon>Bacteria</taxon>
        <taxon>Bacillati</taxon>
        <taxon>Bacillota</taxon>
        <taxon>Bacilli</taxon>
        <taxon>Bacillales</taxon>
        <taxon>Listeriaceae</taxon>
        <taxon>Listeria</taxon>
    </lineage>
</organism>
<keyword id="KW-0002">3D-structure</keyword>
<keyword id="KW-1003">Cell membrane</keyword>
<keyword id="KW-0378">Hydrolase</keyword>
<keyword id="KW-0472">Membrane</keyword>
<keyword id="KW-0645">Protease</keyword>
<keyword id="KW-1185">Reference proteome</keyword>
<keyword id="KW-0788">Thiol protease</keyword>
<keyword id="KW-0812">Transmembrane</keyword>
<keyword id="KW-1133">Transmembrane helix</keyword>
<proteinExistence type="evidence at protein level"/>
<protein>
    <recommendedName>
        <fullName evidence="11">Sortase A</fullName>
        <ecNumber evidence="11">3.4.22.-</ecNumber>
    </recommendedName>
</protein>
<comment type="function">
    <text evidence="3 4 5 6 7 12">Transpeptidase that anchors surface proteins to the cell wall (PubMed:11854224, PubMed:11929538, PubMed:16247833, PubMed:22837151). Recognizes and modifies its substrate by proteolytic cleavage of a C-terminal sorting signal. Following cleavage, a covalent intermediate is formed via a thioester bond between the sortase and its substrate, which is then transferred and covalently attached to the cell wall (Probable). This sortase recognizes a Leu-Pro-x-Thr-Gly (LPXTG) motif, which is cleaved by the sortase between the threonine and glycine residues (PubMed:11929538). Involved in pathogenesis (PubMed:11854224, PubMed:11929538, PubMed:15028680). May regulate the rate of synthesis and/or the stability of a subset of LPXTG proteins (PubMed:22837151). Not involved in cell wall-anchoring of Hbp2 (SvpA) or Hbp1 (PubMed:15028680, PubMed:16247833).</text>
</comment>
<comment type="activity regulation">
    <text evidence="8">Activity is enhanced by Zn(2+) and strongly enhanced by Ca(2+). Inhibited by chalcone, a precursor of several flavonoids, which blocks the SrtA active site.</text>
</comment>
<comment type="subcellular location">
    <subcellularLocation>
        <location evidence="4">Cell membrane</location>
        <topology evidence="11">Single-pass type II membrane protein</topology>
    </subcellularLocation>
</comment>
<comment type="developmental stage">
    <text evidence="7">Seems to contribute mostly when the bacteria reach stationary phase.</text>
</comment>
<comment type="disruption phenotype">
    <text evidence="3 4 5 6 7">Mutant is defective in processing and surface anchoring of internalins and several other LPXTG-containing proteins (PubMed:11854224, PubMed:11929538, PubMed:16247833, PubMed:22837151). Mutant is significantly less invasive in vitro and is attenuated in virulence in a mouse model of infection (PubMed:11854224, PubMed:11929538). Deletion of the gene does not affect expression of the genes encoding LPXTG surface proteins (PubMed:22837151). A double srtA-srtB deletion mutant has no cell wall-anchored proteins, and is as impaired in virulence as a single srtA mutant (PubMed:15028680).</text>
</comment>
<comment type="similarity">
    <text evidence="11">Belongs to the bacterial sortase family. Class A subfamily.</text>
</comment>
<name>SRTA_LISMO</name>
<evidence type="ECO:0000250" key="1">
    <source>
        <dbReference type="UniProtKB" id="Q2FV99"/>
    </source>
</evidence>
<evidence type="ECO:0000255" key="2"/>
<evidence type="ECO:0000269" key="3">
    <source>
    </source>
</evidence>
<evidence type="ECO:0000269" key="4">
    <source>
    </source>
</evidence>
<evidence type="ECO:0000269" key="5">
    <source>
    </source>
</evidence>
<evidence type="ECO:0000269" key="6">
    <source>
    </source>
</evidence>
<evidence type="ECO:0000269" key="7">
    <source>
    </source>
</evidence>
<evidence type="ECO:0000269" key="8">
    <source>
    </source>
</evidence>
<evidence type="ECO:0000303" key="9">
    <source>
    </source>
</evidence>
<evidence type="ECO:0000303" key="10">
    <source>
    </source>
</evidence>
<evidence type="ECO:0000305" key="11"/>
<evidence type="ECO:0000305" key="12">
    <source>
    </source>
</evidence>
<evidence type="ECO:0000312" key="13">
    <source>
        <dbReference type="EMBL" id="CAC99007.1"/>
    </source>
</evidence>
<evidence type="ECO:0007744" key="14">
    <source>
        <dbReference type="PDB" id="5HU4"/>
    </source>
</evidence>
<evidence type="ECO:0007829" key="15">
    <source>
        <dbReference type="PDB" id="5HU4"/>
    </source>
</evidence>
<gene>
    <name evidence="9 10" type="primary">srtA</name>
    <name evidence="13" type="ordered locus">lmo0929</name>
</gene>
<accession>Q8Y8H5</accession>
<dbReference type="EC" id="3.4.22.-" evidence="11"/>
<dbReference type="EMBL" id="AL591977">
    <property type="protein sequence ID" value="CAC99007.1"/>
    <property type="molecule type" value="Genomic_DNA"/>
</dbReference>
<dbReference type="PIR" id="AI1190">
    <property type="entry name" value="AI1190"/>
</dbReference>
<dbReference type="RefSeq" id="NP_464454.1">
    <property type="nucleotide sequence ID" value="NC_003210.1"/>
</dbReference>
<dbReference type="RefSeq" id="WP_003722751.1">
    <property type="nucleotide sequence ID" value="NZ_CP149495.1"/>
</dbReference>
<dbReference type="PDB" id="5HU4">
    <property type="method" value="X-ray"/>
    <property type="resolution" value="2.30 A"/>
    <property type="chains" value="A=78-222"/>
</dbReference>
<dbReference type="PDB" id="7S53">
    <property type="method" value="X-ray"/>
    <property type="resolution" value="1.60 A"/>
    <property type="chains" value="A=189-197"/>
</dbReference>
<dbReference type="PDBsum" id="5HU4"/>
<dbReference type="PDBsum" id="7S53"/>
<dbReference type="SMR" id="Q8Y8H5"/>
<dbReference type="STRING" id="169963.gene:17593584"/>
<dbReference type="MEROPS" id="C60.006"/>
<dbReference type="PaxDb" id="169963-lmo0929"/>
<dbReference type="EnsemblBacteria" id="CAC99007">
    <property type="protein sequence ID" value="CAC99007"/>
    <property type="gene ID" value="CAC99007"/>
</dbReference>
<dbReference type="GeneID" id="986837"/>
<dbReference type="KEGG" id="lmo:lmo0929"/>
<dbReference type="PATRIC" id="fig|169963.11.peg.955"/>
<dbReference type="eggNOG" id="COG3764">
    <property type="taxonomic scope" value="Bacteria"/>
</dbReference>
<dbReference type="HOGENOM" id="CLU_045680_4_1_9"/>
<dbReference type="OrthoDB" id="1648028at2"/>
<dbReference type="PhylomeDB" id="Q8Y8H5"/>
<dbReference type="BioCyc" id="LMON169963:LMO0929-MONOMER"/>
<dbReference type="PHI-base" id="PHI:5478"/>
<dbReference type="Proteomes" id="UP000000817">
    <property type="component" value="Chromosome"/>
</dbReference>
<dbReference type="GO" id="GO:0005886">
    <property type="term" value="C:plasma membrane"/>
    <property type="evidence" value="ECO:0007669"/>
    <property type="project" value="UniProtKB-SubCell"/>
</dbReference>
<dbReference type="GO" id="GO:0008234">
    <property type="term" value="F:cysteine-type peptidase activity"/>
    <property type="evidence" value="ECO:0007669"/>
    <property type="project" value="UniProtKB-KW"/>
</dbReference>
<dbReference type="GO" id="GO:0006508">
    <property type="term" value="P:proteolysis"/>
    <property type="evidence" value="ECO:0007669"/>
    <property type="project" value="UniProtKB-KW"/>
</dbReference>
<dbReference type="CDD" id="cd06165">
    <property type="entry name" value="Sortase_A"/>
    <property type="match status" value="1"/>
</dbReference>
<dbReference type="Gene3D" id="2.40.260.10">
    <property type="entry name" value="Sortase"/>
    <property type="match status" value="1"/>
</dbReference>
<dbReference type="InterPro" id="IPR005754">
    <property type="entry name" value="Sortase"/>
</dbReference>
<dbReference type="InterPro" id="IPR042007">
    <property type="entry name" value="Sortase_A"/>
</dbReference>
<dbReference type="InterPro" id="IPR023365">
    <property type="entry name" value="Sortase_dom-sf"/>
</dbReference>
<dbReference type="NCBIfam" id="TIGR01076">
    <property type="entry name" value="sortase_fam"/>
    <property type="match status" value="1"/>
</dbReference>
<dbReference type="Pfam" id="PF04203">
    <property type="entry name" value="Sortase"/>
    <property type="match status" value="1"/>
</dbReference>
<dbReference type="SUPFAM" id="SSF63817">
    <property type="entry name" value="Sortase"/>
    <property type="match status" value="1"/>
</dbReference>
<reference key="1">
    <citation type="journal article" date="2001" name="Science">
        <title>Comparative genomics of Listeria species.</title>
        <authorList>
            <person name="Glaser P."/>
            <person name="Frangeul L."/>
            <person name="Buchrieser C."/>
            <person name="Rusniok C."/>
            <person name="Amend A."/>
            <person name="Baquero F."/>
            <person name="Berche P."/>
            <person name="Bloecker H."/>
            <person name="Brandt P."/>
            <person name="Chakraborty T."/>
            <person name="Charbit A."/>
            <person name="Chetouani F."/>
            <person name="Couve E."/>
            <person name="de Daruvar A."/>
            <person name="Dehoux P."/>
            <person name="Domann E."/>
            <person name="Dominguez-Bernal G."/>
            <person name="Duchaud E."/>
            <person name="Durant L."/>
            <person name="Dussurget O."/>
            <person name="Entian K.-D."/>
            <person name="Fsihi H."/>
            <person name="Garcia-del Portillo F."/>
            <person name="Garrido P."/>
            <person name="Gautier L."/>
            <person name="Goebel W."/>
            <person name="Gomez-Lopez N."/>
            <person name="Hain T."/>
            <person name="Hauf J."/>
            <person name="Jackson D."/>
            <person name="Jones L.-M."/>
            <person name="Kaerst U."/>
            <person name="Kreft J."/>
            <person name="Kuhn M."/>
            <person name="Kunst F."/>
            <person name="Kurapkat G."/>
            <person name="Madueno E."/>
            <person name="Maitournam A."/>
            <person name="Mata Vicente J."/>
            <person name="Ng E."/>
            <person name="Nedjari H."/>
            <person name="Nordsiek G."/>
            <person name="Novella S."/>
            <person name="de Pablos B."/>
            <person name="Perez-Diaz J.-C."/>
            <person name="Purcell R."/>
            <person name="Remmel B."/>
            <person name="Rose M."/>
            <person name="Schlueter T."/>
            <person name="Simoes N."/>
            <person name="Tierrez A."/>
            <person name="Vazquez-Boland J.-A."/>
            <person name="Voss H."/>
            <person name="Wehland J."/>
            <person name="Cossart P."/>
        </authorList>
    </citation>
    <scope>NUCLEOTIDE SEQUENCE [LARGE SCALE GENOMIC DNA]</scope>
    <source>
        <strain>ATCC BAA-679 / EGD-e</strain>
    </source>
</reference>
<reference key="2">
    <citation type="journal article" date="2002" name="Infect. Immun.">
        <title>The sortase SrtA of Listeria monocytogenes is involved in processing of internalin and in virulence.</title>
        <authorList>
            <person name="Garandeau C."/>
            <person name="Reglier-Poupet H."/>
            <person name="Dubail I."/>
            <person name="Beretti J.L."/>
            <person name="Berche P."/>
            <person name="Charbit A."/>
        </authorList>
    </citation>
    <scope>FUNCTION</scope>
    <scope>DISRUPTION PHENOTYPE</scope>
    <source>
        <strain>ATCC BAA-679 / EGD-e</strain>
    </source>
</reference>
<reference key="3">
    <citation type="journal article" date="2002" name="Mol. Microbiol.">
        <title>Inactivation of the srtA gene in Listeria monocytogenes inhibits anchoring of surface proteins and affects virulence.</title>
        <authorList>
            <person name="Bierne H."/>
            <person name="Mazmanian S.K."/>
            <person name="Trost M."/>
            <person name="Pucciarelli M.G."/>
            <person name="Liu G."/>
            <person name="Dehoux P."/>
            <person name="Jansch L."/>
            <person name="Garcia-del Portillo F."/>
            <person name="Schneewind O."/>
            <person name="Cossart P."/>
        </authorList>
    </citation>
    <scope>FUNCTION</scope>
    <scope>SUBCELLULAR LOCATION</scope>
    <scope>DISRUPTION PHENOTYPE</scope>
    <source>
        <strain>ATCC BAA-679 / EGD-e</strain>
    </source>
</reference>
<reference key="4">
    <citation type="journal article" date="2004" name="J. Bacteriol.">
        <title>Sortase B, a new class of sortase in Listeria monocytogenes.</title>
        <authorList>
            <person name="Bierne H."/>
            <person name="Garandeau C."/>
            <person name="Pucciarelli M.G."/>
            <person name="Sabet C."/>
            <person name="Newton S."/>
            <person name="Garcia-del Portillo F."/>
            <person name="Cossart P."/>
            <person name="Charbit A."/>
        </authorList>
    </citation>
    <scope>FUNCTION</scope>
    <scope>DISRUPTION PHENOTYPE</scope>
    <source>
        <strain>ATCC BAA-679 / EGD-e</strain>
    </source>
</reference>
<reference key="5">
    <citation type="journal article" date="2005" name="Proteomics">
        <title>Identification of substrates of the Listeria monocytogenes sortases A and B by a non-gel proteomic analysis.</title>
        <authorList>
            <person name="Pucciarelli M.G."/>
            <person name="Calvo E."/>
            <person name="Sabet C."/>
            <person name="Bierne H."/>
            <person name="Cossart P."/>
            <person name="Garcia-del Portillo F."/>
        </authorList>
    </citation>
    <scope>FUNCTION</scope>
    <scope>SUBSTRATE SPECIFICITY</scope>
    <scope>DISRUPTION PHENOTYPE</scope>
    <source>
        <strain>ATCC BAA-679 / EGD-e</strain>
    </source>
</reference>
<reference key="6">
    <citation type="journal article" date="2012" name="Int. Microbiol.">
        <title>Contribution of sortase A to the regulation of Listeria monocytogenes LPXTG surface proteins.</title>
        <authorList>
            <person name="Mariscotti J.F."/>
            <person name="Quereda J.J."/>
            <person name="Pucciarelli M.G."/>
        </authorList>
    </citation>
    <scope>FUNCTION</scope>
    <scope>SUBSTRATES</scope>
    <scope>DEVELOPMENTAL STAGE</scope>
    <scope>DISRUPTION PHENOTYPE</scope>
    <source>
        <strain>ATCC BAA-679 / EGD-e</strain>
    </source>
</reference>
<reference key="7">
    <citation type="journal article" date="2011" name="Proteins">
        <title>Structural changes of Listeria monocytogenes sortase A: a key to understanding the catalytic mechanism.</title>
        <authorList>
            <person name="Tian B."/>
            <person name="Eriksson L.A."/>
        </authorList>
    </citation>
    <scope>3D-STRUCTURE MODELING</scope>
</reference>
<reference evidence="14" key="8">
    <citation type="journal article" date="2016" name="Biochem. Pharmacol.">
        <title>Inhibition of sortase A by chalcone prevents Listeria monocytogenes infection.</title>
        <authorList>
            <person name="Li H."/>
            <person name="Chen Y."/>
            <person name="Zhang B."/>
            <person name="Niu X."/>
            <person name="Song M."/>
            <person name="Luo Z."/>
            <person name="Lu G."/>
            <person name="Liu B."/>
            <person name="Zhao X."/>
            <person name="Wang J."/>
            <person name="Deng X."/>
        </authorList>
    </citation>
    <scope>X-RAY CRYSTALLOGRAPHY (2.30 ANGSTROMS) OF 78-222</scope>
    <scope>ACTIVITY REGULATION</scope>
    <scope>MUTAGENESIS OF HIS-127; CYS-188 AND ARG-197</scope>
    <source>
        <strain>BUG1600</strain>
    </source>
</reference>